<accession>O35491</accession>
<accession>E9Q721</accession>
<proteinExistence type="evidence at protein level"/>
<protein>
    <recommendedName>
        <fullName>Dual specificity protein kinase CLK2</fullName>
        <ecNumber>2.7.12.1</ecNumber>
    </recommendedName>
    <alternativeName>
        <fullName>CDC-like kinase 2</fullName>
    </alternativeName>
</protein>
<sequence>MPHPRRYHSSERGSRGSYHEHYQSRKHKRRRSRSWSSSSDRTRRRRREDSYHVRSRSSYDDHSSDRRLYDRRYCGSYRRNDYSRDRGEAYYDTDFRQSYEYHRENSSYRSQRSSRRKHRRRRRRSRTFSRSSSHSSRRAKSVEDDAEGHLIYHVGDWLQERYEIVSTLGEGTFGRVVQCVDHRRGGTQVALKIIKNVEKYKEAARLEINVLEKINEKDPDNKNLCVQMFDWFDYHGHMCISFELLGLSTFDFLKDNNYLPYPIHQVRHMAFQLCQAVKFLHDNKLTHTDLKPENILFVNSDYELTYNLEKKRDERSVKSTAVRVVDFGSATFDHEHHSTIVSTRHYRAPEVILELGWSQPCDVWSIGCIIFEYYVGFTLFQTHDNREHLAMMERILGPVPSRMIRKTRKQKYFYRGRLDWDENTSAGRYVRENCKPLRRYLTSEAEDHHQLFDLIENMLEYEPAKRLTLGEALQHPFFACLRTEPPNTKLWDSSRDISR</sequence>
<keyword id="KW-0067">ATP-binding</keyword>
<keyword id="KW-0418">Kinase</keyword>
<keyword id="KW-0547">Nucleotide-binding</keyword>
<keyword id="KW-0539">Nucleus</keyword>
<keyword id="KW-0597">Phosphoprotein</keyword>
<keyword id="KW-1185">Reference proteome</keyword>
<keyword id="KW-0723">Serine/threonine-protein kinase</keyword>
<keyword id="KW-0808">Transferase</keyword>
<keyword id="KW-0829">Tyrosine-protein kinase</keyword>
<reference key="1">
    <citation type="journal article" date="1997" name="Biochem. J.">
        <title>Characterization and comparison of four serine- and arginine-rich (SR) protein kinases.</title>
        <authorList>
            <person name="Nayler O."/>
            <person name="Stamm S."/>
            <person name="Ullrich A."/>
        </authorList>
    </citation>
    <scope>NUCLEOTIDE SEQUENCE [MRNA]</scope>
    <scope>FUNCTION</scope>
    <scope>AUTOPHOSPHORYLATION</scope>
    <scope>SUBCELLULAR LOCATION</scope>
</reference>
<reference key="2">
    <citation type="journal article" date="2009" name="PLoS Biol.">
        <title>Lineage-specific biology revealed by a finished genome assembly of the mouse.</title>
        <authorList>
            <person name="Church D.M."/>
            <person name="Goodstadt L."/>
            <person name="Hillier L.W."/>
            <person name="Zody M.C."/>
            <person name="Goldstein S."/>
            <person name="She X."/>
            <person name="Bult C.J."/>
            <person name="Agarwala R."/>
            <person name="Cherry J.L."/>
            <person name="DiCuccio M."/>
            <person name="Hlavina W."/>
            <person name="Kapustin Y."/>
            <person name="Meric P."/>
            <person name="Maglott D."/>
            <person name="Birtle Z."/>
            <person name="Marques A.C."/>
            <person name="Graves T."/>
            <person name="Zhou S."/>
            <person name="Teague B."/>
            <person name="Potamousis K."/>
            <person name="Churas C."/>
            <person name="Place M."/>
            <person name="Herschleb J."/>
            <person name="Runnheim R."/>
            <person name="Forrest D."/>
            <person name="Amos-Landgraf J."/>
            <person name="Schwartz D.C."/>
            <person name="Cheng Z."/>
            <person name="Lindblad-Toh K."/>
            <person name="Eichler E.E."/>
            <person name="Ponting C.P."/>
        </authorList>
    </citation>
    <scope>NUCLEOTIDE SEQUENCE [LARGE SCALE GENOMIC DNA]</scope>
    <source>
        <strain>C57BL/6J</strain>
    </source>
</reference>
<reference key="3">
    <citation type="journal article" date="1998" name="J. Biol. Chem.">
        <title>The cellular localization of the murine serine/arginine-rich protein kinase CLK2 is regulated by serine 141 autophosphorylation.</title>
        <authorList>
            <person name="Nayler O."/>
            <person name="Schnorrer F."/>
            <person name="Stamm S."/>
            <person name="Ullrich A."/>
        </authorList>
    </citation>
    <scope>PHOSPHORYLATION AT SER-141</scope>
    <scope>SUBCELLULAR LOCATION</scope>
    <scope>ACTIVITY REGULATION</scope>
    <scope>MUTAGENESIS OF SER-141</scope>
</reference>
<reference key="4">
    <citation type="journal article" date="2004" name="J. Biol. Chem.">
        <title>Manipulation of alternative splicing by a newly developed inhibitor of Clks.</title>
        <authorList>
            <person name="Muraki M."/>
            <person name="Ohkawara B."/>
            <person name="Hosoya T."/>
            <person name="Onogi H."/>
            <person name="Koizumi J."/>
            <person name="Koizumi T."/>
            <person name="Sumi K."/>
            <person name="Yomoda J."/>
            <person name="Murray M.V."/>
            <person name="Kimura H."/>
            <person name="Furuichi K."/>
            <person name="Shibuya H."/>
            <person name="Krainer A.R."/>
            <person name="Suzuki M."/>
            <person name="Hagiwara M."/>
        </authorList>
    </citation>
    <scope>ACTIVITY REGULATION</scope>
</reference>
<reference key="5">
    <citation type="journal article" date="2010" name="Cell">
        <title>A tissue-specific atlas of mouse protein phosphorylation and expression.</title>
        <authorList>
            <person name="Huttlin E.L."/>
            <person name="Jedrychowski M.P."/>
            <person name="Elias J.E."/>
            <person name="Goswami T."/>
            <person name="Rad R."/>
            <person name="Beausoleil S.A."/>
            <person name="Villen J."/>
            <person name="Haas W."/>
            <person name="Sowa M.E."/>
            <person name="Gygi S.P."/>
        </authorList>
    </citation>
    <scope>PHOSPHORYLATION [LARGE SCALE ANALYSIS] AT SER-141</scope>
    <scope>IDENTIFICATION BY MASS SPECTROMETRY [LARGE SCALE ANALYSIS]</scope>
    <source>
        <tissue>Brain</tissue>
        <tissue>Lung</tissue>
        <tissue>Spleen</tissue>
    </source>
</reference>
<reference key="6">
    <citation type="journal article" date="2010" name="Cell Metab.">
        <title>Cdc2-like kinase 2 is an insulin-regulated suppressor of hepatic gluconeogenesis.</title>
        <authorList>
            <person name="Rodgers J.T."/>
            <person name="Haas W."/>
            <person name="Gygi S.P."/>
            <person name="Puigserver P."/>
        </authorList>
    </citation>
    <scope>FUNCTION</scope>
    <scope>PHOSPHORYLATION AT SER-98; TYR-99 AND THR-343</scope>
    <scope>INDUCTION</scope>
    <scope>INTERACTION WITH AKT1</scope>
</reference>
<reference key="7">
    <citation type="journal article" date="2011" name="Mol. Cell">
        <title>Clk2 and B56-beta mediate insulin-regulated assembly of the PP2A phosphatase holoenzyme complex on Akt.</title>
        <authorList>
            <person name="Rodgers J.T."/>
            <person name="Vogel R.O."/>
            <person name="Puigserver P."/>
        </authorList>
    </citation>
    <scope>FUNCTION</scope>
</reference>
<comment type="function">
    <text evidence="2 7 8 9">Dual specificity kinase acting on both serine/threonine and tyrosine-containing substrates. Phosphorylates serine- and arginine-rich (SR) proteins of the spliceosomal complex. May be a constituent of a network of regulatory mechanisms that enable SR proteins to control RNA splicing and can cause redistribution of SR proteins from speckles to a diffuse nucleoplasmic distribution. Acts as a suppressor of hepatic gluconeogenesis and glucose output by repressing PPARGC1A transcriptional activity on gluconeogenic genes via its phosphorylation. Phosphorylates PPP2R5B thereby stimulating the assembly of PP2A phosphatase with the PPP2R5B-AKT1 complex leading to dephosphorylation of AKT1. Phosphorylates: PTPN1, SRSF1 and SRSF3. Regulates the alternative splicing of tissue factor (F3) pre-mRNA in endothelial cells. Phosphorylates PAGE4 at several serine and threonine residues and this phosphorylation attenuates the ability of PAGE4 to potentiate the transcriptional activator activity of JUN (By similarity).</text>
</comment>
<comment type="catalytic activity">
    <reaction>
        <text>L-seryl-[protein] + ATP = O-phospho-L-seryl-[protein] + ADP + H(+)</text>
        <dbReference type="Rhea" id="RHEA:17989"/>
        <dbReference type="Rhea" id="RHEA-COMP:9863"/>
        <dbReference type="Rhea" id="RHEA-COMP:11604"/>
        <dbReference type="ChEBI" id="CHEBI:15378"/>
        <dbReference type="ChEBI" id="CHEBI:29999"/>
        <dbReference type="ChEBI" id="CHEBI:30616"/>
        <dbReference type="ChEBI" id="CHEBI:83421"/>
        <dbReference type="ChEBI" id="CHEBI:456216"/>
        <dbReference type="EC" id="2.7.12.1"/>
    </reaction>
</comment>
<comment type="catalytic activity">
    <reaction>
        <text>L-threonyl-[protein] + ATP = O-phospho-L-threonyl-[protein] + ADP + H(+)</text>
        <dbReference type="Rhea" id="RHEA:46608"/>
        <dbReference type="Rhea" id="RHEA-COMP:11060"/>
        <dbReference type="Rhea" id="RHEA-COMP:11605"/>
        <dbReference type="ChEBI" id="CHEBI:15378"/>
        <dbReference type="ChEBI" id="CHEBI:30013"/>
        <dbReference type="ChEBI" id="CHEBI:30616"/>
        <dbReference type="ChEBI" id="CHEBI:61977"/>
        <dbReference type="ChEBI" id="CHEBI:456216"/>
        <dbReference type="EC" id="2.7.12.1"/>
    </reaction>
</comment>
<comment type="catalytic activity">
    <reaction>
        <text>L-tyrosyl-[protein] + ATP = O-phospho-L-tyrosyl-[protein] + ADP + H(+)</text>
        <dbReference type="Rhea" id="RHEA:10596"/>
        <dbReference type="Rhea" id="RHEA-COMP:10136"/>
        <dbReference type="Rhea" id="RHEA-COMP:20101"/>
        <dbReference type="ChEBI" id="CHEBI:15378"/>
        <dbReference type="ChEBI" id="CHEBI:30616"/>
        <dbReference type="ChEBI" id="CHEBI:46858"/>
        <dbReference type="ChEBI" id="CHEBI:61978"/>
        <dbReference type="ChEBI" id="CHEBI:456216"/>
        <dbReference type="EC" id="2.7.12.1"/>
    </reaction>
</comment>
<comment type="activity regulation">
    <text evidence="6 10">5,6-dichloro-1-b-D-ribofuranosylbenzimidazole (DRB) inhibits autophosphorylation. TG003 inhibits its kinase activity and affects the regulation of alternative splicing mediated by phosphorylation of SR proteins.</text>
</comment>
<comment type="subunit">
    <text evidence="1 7">Interacts with RBMX and UBL5 (By similarity). Interacts with AKT1.</text>
</comment>
<comment type="subcellular location">
    <subcellularLocation>
        <location evidence="9 10">Nucleus</location>
    </subcellularLocation>
    <subcellularLocation>
        <location evidence="10">Nucleus speckle</location>
    </subcellularLocation>
    <text evidence="10">Inhibition of phosphorylation at Ser-141 results in accumulation in the nuclear speckle.</text>
</comment>
<comment type="induction">
    <text evidence="7">By insulin (at protein level).</text>
</comment>
<comment type="PTM">
    <text evidence="7 10">Autophosphorylates on all three types of residues. Phosphorylation on Ser-34 and Thr-127 by AKT1 is induced by ionizing radiation or insulin. Phosphorylation plays a critical role in cell proliferation following low dose radiation and prevents cell death following high dose radiation. Phosphorylation at Thr-343 by PKB/AKT2 induces its kinase activity which is required for its stability. The phosphorylation status at Ser-141 influences its subnuclear localization; inhibition of phosphorylation at Ser-141 results in accumulation in the nuclear speckle.</text>
</comment>
<comment type="similarity">
    <text evidence="11">Belongs to the protein kinase superfamily. CMGC Ser/Thr protein kinase family. Lammer subfamily.</text>
</comment>
<gene>
    <name type="primary">Clk2</name>
</gene>
<name>CLK2_MOUSE</name>
<organism>
    <name type="scientific">Mus musculus</name>
    <name type="common">Mouse</name>
    <dbReference type="NCBI Taxonomy" id="10090"/>
    <lineage>
        <taxon>Eukaryota</taxon>
        <taxon>Metazoa</taxon>
        <taxon>Chordata</taxon>
        <taxon>Craniata</taxon>
        <taxon>Vertebrata</taxon>
        <taxon>Euteleostomi</taxon>
        <taxon>Mammalia</taxon>
        <taxon>Eutheria</taxon>
        <taxon>Euarchontoglires</taxon>
        <taxon>Glires</taxon>
        <taxon>Rodentia</taxon>
        <taxon>Myomorpha</taxon>
        <taxon>Muroidea</taxon>
        <taxon>Muridae</taxon>
        <taxon>Murinae</taxon>
        <taxon>Mus</taxon>
        <taxon>Mus</taxon>
    </lineage>
</organism>
<dbReference type="EC" id="2.7.12.1"/>
<dbReference type="EMBL" id="AF033564">
    <property type="protein sequence ID" value="AAB87508.1"/>
    <property type="molecule type" value="mRNA"/>
</dbReference>
<dbReference type="EMBL" id="AC161600">
    <property type="status" value="NOT_ANNOTATED_CDS"/>
    <property type="molecule type" value="Genomic_DNA"/>
</dbReference>
<dbReference type="CCDS" id="CCDS17491.1"/>
<dbReference type="RefSeq" id="NP_031738.2">
    <property type="nucleotide sequence ID" value="NM_007712.4"/>
</dbReference>
<dbReference type="SMR" id="O35491"/>
<dbReference type="BioGRID" id="198752">
    <property type="interactions" value="2"/>
</dbReference>
<dbReference type="FunCoup" id="O35491">
    <property type="interactions" value="3291"/>
</dbReference>
<dbReference type="STRING" id="10090.ENSMUSP00000113390"/>
<dbReference type="BindingDB" id="O35491"/>
<dbReference type="ChEMBL" id="CHEMBL1075281"/>
<dbReference type="GuidetoPHARMACOLOGY" id="1991"/>
<dbReference type="GlyGen" id="O35491">
    <property type="glycosylation" value="1 site, 1 O-linked glycan (1 site)"/>
</dbReference>
<dbReference type="iPTMnet" id="O35491"/>
<dbReference type="PhosphoSitePlus" id="O35491"/>
<dbReference type="jPOST" id="O35491"/>
<dbReference type="PaxDb" id="10090-ENSMUSP00000113390"/>
<dbReference type="ProteomicsDB" id="283303"/>
<dbReference type="Pumba" id="O35491"/>
<dbReference type="Antibodypedia" id="34187">
    <property type="antibodies" value="323 antibodies from 31 providers"/>
</dbReference>
<dbReference type="DNASU" id="12748"/>
<dbReference type="Ensembl" id="ENSMUST00000121212.9">
    <property type="protein sequence ID" value="ENSMUSP00000113390.3"/>
    <property type="gene ID" value="ENSMUSG00000068917.14"/>
</dbReference>
<dbReference type="GeneID" id="12748"/>
<dbReference type="KEGG" id="mmu:12748"/>
<dbReference type="UCSC" id="uc008pxt.2">
    <property type="organism name" value="mouse"/>
</dbReference>
<dbReference type="AGR" id="MGI:1098669"/>
<dbReference type="CTD" id="1196"/>
<dbReference type="MGI" id="MGI:1098669">
    <property type="gene designation" value="Clk2"/>
</dbReference>
<dbReference type="VEuPathDB" id="HostDB:ENSMUSG00000068917"/>
<dbReference type="eggNOG" id="KOG0671">
    <property type="taxonomic scope" value="Eukaryota"/>
</dbReference>
<dbReference type="GeneTree" id="ENSGT00940000154947"/>
<dbReference type="InParanoid" id="O35491"/>
<dbReference type="TreeFam" id="TF101041"/>
<dbReference type="BRENDA" id="2.7.12.1">
    <property type="organism ID" value="3474"/>
</dbReference>
<dbReference type="BioGRID-ORCS" id="12748">
    <property type="hits" value="4 hits in 80 CRISPR screens"/>
</dbReference>
<dbReference type="PRO" id="PR:O35491"/>
<dbReference type="Proteomes" id="UP000000589">
    <property type="component" value="Chromosome 3"/>
</dbReference>
<dbReference type="RNAct" id="O35491">
    <property type="molecule type" value="protein"/>
</dbReference>
<dbReference type="Bgee" id="ENSMUSG00000068917">
    <property type="expression patterns" value="Expressed in undifferentiated genital tubercle and 265 other cell types or tissues"/>
</dbReference>
<dbReference type="ExpressionAtlas" id="O35491">
    <property type="expression patterns" value="baseline and differential"/>
</dbReference>
<dbReference type="GO" id="GO:0016607">
    <property type="term" value="C:nuclear speck"/>
    <property type="evidence" value="ECO:0007669"/>
    <property type="project" value="UniProtKB-SubCell"/>
</dbReference>
<dbReference type="GO" id="GO:0005634">
    <property type="term" value="C:nucleus"/>
    <property type="evidence" value="ECO:0000314"/>
    <property type="project" value="MGI"/>
</dbReference>
<dbReference type="GO" id="GO:0005524">
    <property type="term" value="F:ATP binding"/>
    <property type="evidence" value="ECO:0007669"/>
    <property type="project" value="UniProtKB-KW"/>
</dbReference>
<dbReference type="GO" id="GO:0106310">
    <property type="term" value="F:protein serine kinase activity"/>
    <property type="evidence" value="ECO:0007669"/>
    <property type="project" value="RHEA"/>
</dbReference>
<dbReference type="GO" id="GO:0004674">
    <property type="term" value="F:protein serine/threonine kinase activity"/>
    <property type="evidence" value="ECO:0000314"/>
    <property type="project" value="UniProtKB"/>
</dbReference>
<dbReference type="GO" id="GO:0004712">
    <property type="term" value="F:protein serine/threonine/tyrosine kinase activity"/>
    <property type="evidence" value="ECO:0007669"/>
    <property type="project" value="UniProtKB-EC"/>
</dbReference>
<dbReference type="GO" id="GO:0004713">
    <property type="term" value="F:protein tyrosine kinase activity"/>
    <property type="evidence" value="ECO:0000314"/>
    <property type="project" value="MGI"/>
</dbReference>
<dbReference type="GO" id="GO:0045721">
    <property type="term" value="P:negative regulation of gluconeogenesis"/>
    <property type="evidence" value="ECO:0000315"/>
    <property type="project" value="UniProtKB"/>
</dbReference>
<dbReference type="GO" id="GO:0046777">
    <property type="term" value="P:protein autophosphorylation"/>
    <property type="evidence" value="ECO:0000314"/>
    <property type="project" value="UniProtKB"/>
</dbReference>
<dbReference type="GO" id="GO:0006468">
    <property type="term" value="P:protein phosphorylation"/>
    <property type="evidence" value="ECO:0000314"/>
    <property type="project" value="UniProtKB"/>
</dbReference>
<dbReference type="GO" id="GO:0043484">
    <property type="term" value="P:regulation of RNA splicing"/>
    <property type="evidence" value="ECO:0000250"/>
    <property type="project" value="UniProtKB"/>
</dbReference>
<dbReference type="GO" id="GO:0010212">
    <property type="term" value="P:response to ionizing radiation"/>
    <property type="evidence" value="ECO:0000250"/>
    <property type="project" value="UniProtKB"/>
</dbReference>
<dbReference type="GO" id="GO:0032526">
    <property type="term" value="P:response to retinoic acid"/>
    <property type="evidence" value="ECO:0000314"/>
    <property type="project" value="MGI"/>
</dbReference>
<dbReference type="CDD" id="cd14215">
    <property type="entry name" value="PKc_CLK2"/>
    <property type="match status" value="1"/>
</dbReference>
<dbReference type="FunFam" id="1.10.510.10:FF:000145">
    <property type="entry name" value="Dual specificity protein kinase CLK2"/>
    <property type="match status" value="1"/>
</dbReference>
<dbReference type="FunFam" id="3.30.200.20:FF:000061">
    <property type="entry name" value="Dual specificity protein kinase CLK2"/>
    <property type="match status" value="1"/>
</dbReference>
<dbReference type="Gene3D" id="3.30.200.20">
    <property type="entry name" value="Phosphorylase Kinase, domain 1"/>
    <property type="match status" value="1"/>
</dbReference>
<dbReference type="Gene3D" id="1.10.510.10">
    <property type="entry name" value="Transferase(Phosphotransferase) domain 1"/>
    <property type="match status" value="1"/>
</dbReference>
<dbReference type="InterPro" id="IPR051175">
    <property type="entry name" value="CLK_kinases"/>
</dbReference>
<dbReference type="InterPro" id="IPR011009">
    <property type="entry name" value="Kinase-like_dom_sf"/>
</dbReference>
<dbReference type="InterPro" id="IPR000719">
    <property type="entry name" value="Prot_kinase_dom"/>
</dbReference>
<dbReference type="InterPro" id="IPR017441">
    <property type="entry name" value="Protein_kinase_ATP_BS"/>
</dbReference>
<dbReference type="InterPro" id="IPR008271">
    <property type="entry name" value="Ser/Thr_kinase_AS"/>
</dbReference>
<dbReference type="PANTHER" id="PTHR45646:SF6">
    <property type="entry name" value="DUAL SPECIFICITY PROTEIN KINASE CLK2"/>
    <property type="match status" value="1"/>
</dbReference>
<dbReference type="PANTHER" id="PTHR45646">
    <property type="entry name" value="SERINE/THREONINE-PROTEIN KINASE DOA-RELATED"/>
    <property type="match status" value="1"/>
</dbReference>
<dbReference type="Pfam" id="PF00069">
    <property type="entry name" value="Pkinase"/>
    <property type="match status" value="1"/>
</dbReference>
<dbReference type="SMART" id="SM00220">
    <property type="entry name" value="S_TKc"/>
    <property type="match status" value="1"/>
</dbReference>
<dbReference type="SUPFAM" id="SSF56112">
    <property type="entry name" value="Protein kinase-like (PK-like)"/>
    <property type="match status" value="1"/>
</dbReference>
<dbReference type="PROSITE" id="PS00107">
    <property type="entry name" value="PROTEIN_KINASE_ATP"/>
    <property type="match status" value="1"/>
</dbReference>
<dbReference type="PROSITE" id="PS50011">
    <property type="entry name" value="PROTEIN_KINASE_DOM"/>
    <property type="match status" value="1"/>
</dbReference>
<dbReference type="PROSITE" id="PS00108">
    <property type="entry name" value="PROTEIN_KINASE_ST"/>
    <property type="match status" value="1"/>
</dbReference>
<evidence type="ECO:0000250" key="1"/>
<evidence type="ECO:0000250" key="2">
    <source>
        <dbReference type="UniProtKB" id="P49760"/>
    </source>
</evidence>
<evidence type="ECO:0000255" key="3">
    <source>
        <dbReference type="PROSITE-ProRule" id="PRU00159"/>
    </source>
</evidence>
<evidence type="ECO:0000255" key="4">
    <source>
        <dbReference type="PROSITE-ProRule" id="PRU10027"/>
    </source>
</evidence>
<evidence type="ECO:0000256" key="5">
    <source>
        <dbReference type="SAM" id="MobiDB-lite"/>
    </source>
</evidence>
<evidence type="ECO:0000269" key="6">
    <source>
    </source>
</evidence>
<evidence type="ECO:0000269" key="7">
    <source>
    </source>
</evidence>
<evidence type="ECO:0000269" key="8">
    <source>
    </source>
</evidence>
<evidence type="ECO:0000269" key="9">
    <source>
    </source>
</evidence>
<evidence type="ECO:0000269" key="10">
    <source>
    </source>
</evidence>
<evidence type="ECO:0000305" key="11"/>
<evidence type="ECO:0007744" key="12">
    <source>
    </source>
</evidence>
<feature type="chain" id="PRO_0000085869" description="Dual specificity protein kinase CLK2">
    <location>
        <begin position="1"/>
        <end position="499"/>
    </location>
</feature>
<feature type="domain" description="Protein kinase" evidence="3">
    <location>
        <begin position="163"/>
        <end position="479"/>
    </location>
</feature>
<feature type="region of interest" description="Disordered" evidence="5">
    <location>
        <begin position="1"/>
        <end position="65"/>
    </location>
</feature>
<feature type="region of interest" description="Disordered" evidence="5">
    <location>
        <begin position="102"/>
        <end position="142"/>
    </location>
</feature>
<feature type="compositionally biased region" description="Basic and acidic residues" evidence="5">
    <location>
        <begin position="8"/>
        <end position="23"/>
    </location>
</feature>
<feature type="compositionally biased region" description="Basic residues" evidence="5">
    <location>
        <begin position="24"/>
        <end position="33"/>
    </location>
</feature>
<feature type="compositionally biased region" description="Basic and acidic residues" evidence="5">
    <location>
        <begin position="47"/>
        <end position="65"/>
    </location>
</feature>
<feature type="compositionally biased region" description="Basic residues" evidence="5">
    <location>
        <begin position="112"/>
        <end position="127"/>
    </location>
</feature>
<feature type="active site" description="Proton acceptor" evidence="3 4">
    <location>
        <position position="289"/>
    </location>
</feature>
<feature type="binding site" evidence="3">
    <location>
        <begin position="168"/>
        <end position="176"/>
    </location>
    <ligand>
        <name>ATP</name>
        <dbReference type="ChEBI" id="CHEBI:30616"/>
    </ligand>
</feature>
<feature type="binding site" evidence="3">
    <location>
        <position position="192"/>
    </location>
    <ligand>
        <name>ATP</name>
        <dbReference type="ChEBI" id="CHEBI:30616"/>
    </ligand>
</feature>
<feature type="modified residue" description="Phosphoserine; by PKB/AKT1" evidence="2">
    <location>
        <position position="34"/>
    </location>
</feature>
<feature type="modified residue" description="Phosphoserine; by autocatalysis" evidence="7">
    <location>
        <position position="98"/>
    </location>
</feature>
<feature type="modified residue" description="Phosphotyrosine; by autocatalysis" evidence="7">
    <location>
        <position position="99"/>
    </location>
</feature>
<feature type="modified residue" description="Phosphothreonine; by PKB/AKT1" evidence="2">
    <location>
        <position position="127"/>
    </location>
</feature>
<feature type="modified residue" description="Phosphoserine; by autocatalysis" evidence="10 12">
    <location>
        <position position="141"/>
    </location>
</feature>
<feature type="modified residue" description="Phosphotyrosine" evidence="2">
    <location>
        <position position="152"/>
    </location>
</feature>
<feature type="modified residue" description="Phosphothreonine; by PKB/AKT2" evidence="7">
    <location>
        <position position="343"/>
    </location>
</feature>
<feature type="mutagenesis site" description="Loss of phosphorylation." evidence="10">
    <original>S</original>
    <variation>A</variation>
    <variation>E</variation>
    <location>
        <position position="141"/>
    </location>
</feature>
<feature type="sequence conflict" description="In Ref. 1; AAB87508." evidence="11" ref="1">
    <original>F</original>
    <variation>S</variation>
    <location>
        <position position="173"/>
    </location>
</feature>
<feature type="sequence conflict" description="In Ref. 1; AAB87508." evidence="11" ref="1">
    <original>Q</original>
    <variation>R</variation>
    <location>
        <position position="188"/>
    </location>
</feature>